<protein>
    <recommendedName>
        <fullName evidence="1">Cysteine--tRNA ligase</fullName>
        <ecNumber evidence="1">6.1.1.16</ecNumber>
    </recommendedName>
    <alternativeName>
        <fullName evidence="1">Cysteinyl-tRNA synthetase</fullName>
        <shortName evidence="1">CysRS</shortName>
    </alternativeName>
</protein>
<sequence length="459" mass="52200">MLKLYNSLTRQKEEFKPLQPGKVGMYVCGITIYDLCHIGHGRTFVSFDMIVRYLRYSGYDVNFLRNITDVDDKIIKRANENKESCESLTERLIGEMHRDFDALNMKRPDFEPRATLHIPEIIDMVEKLIEKEHAYVSGNGDVLFSVSSFPEYGRLSGQNLDQLQAGARVEVEDTKRDPMDFVLWKMSKPGEPTWESPWGPGRPGWHIECSAMNSKHLGQHFDIHGGGSDLQFPHHENEIAQSCCAHNTPYVNYWMHTGMVMVDKEKMSKSLNNFFTIRDVLEHYDAATVRYFLLSGHYRSQLNYSEDNLKQAKSALERLYTSLKGLDLSVEAASADEYVAKFKVAMDDDFNTPEAYSVLFEMVREINRLKEADNAKASSLGVKLKELADVLGILDQDVDTFFKGEGSTDEVAEIEALIAERNRARAEKDWPAADVARDGLNALGVILEDGPEGTTWRKK</sequence>
<accession>A8FTH6</accession>
<reference key="1">
    <citation type="submission" date="2007-08" db="EMBL/GenBank/DDBJ databases">
        <title>Complete sequence of Shewanella sediminis HAW-EB3.</title>
        <authorList>
            <consortium name="US DOE Joint Genome Institute"/>
            <person name="Copeland A."/>
            <person name="Lucas S."/>
            <person name="Lapidus A."/>
            <person name="Barry K."/>
            <person name="Glavina del Rio T."/>
            <person name="Dalin E."/>
            <person name="Tice H."/>
            <person name="Pitluck S."/>
            <person name="Chertkov O."/>
            <person name="Brettin T."/>
            <person name="Bruce D."/>
            <person name="Detter J.C."/>
            <person name="Han C."/>
            <person name="Schmutz J."/>
            <person name="Larimer F."/>
            <person name="Land M."/>
            <person name="Hauser L."/>
            <person name="Kyrpides N."/>
            <person name="Kim E."/>
            <person name="Zhao J.-S."/>
            <person name="Richardson P."/>
        </authorList>
    </citation>
    <scope>NUCLEOTIDE SEQUENCE [LARGE SCALE GENOMIC DNA]</scope>
    <source>
        <strain>HAW-EB3</strain>
    </source>
</reference>
<proteinExistence type="inferred from homology"/>
<keyword id="KW-0030">Aminoacyl-tRNA synthetase</keyword>
<keyword id="KW-0067">ATP-binding</keyword>
<keyword id="KW-0963">Cytoplasm</keyword>
<keyword id="KW-0436">Ligase</keyword>
<keyword id="KW-0479">Metal-binding</keyword>
<keyword id="KW-0547">Nucleotide-binding</keyword>
<keyword id="KW-0648">Protein biosynthesis</keyword>
<keyword id="KW-1185">Reference proteome</keyword>
<keyword id="KW-0862">Zinc</keyword>
<gene>
    <name evidence="1" type="primary">cysS</name>
    <name type="ordered locus">Ssed_1538</name>
</gene>
<evidence type="ECO:0000255" key="1">
    <source>
        <dbReference type="HAMAP-Rule" id="MF_00041"/>
    </source>
</evidence>
<name>SYC_SHESH</name>
<dbReference type="EC" id="6.1.1.16" evidence="1"/>
<dbReference type="EMBL" id="CP000821">
    <property type="protein sequence ID" value="ABV36149.1"/>
    <property type="molecule type" value="Genomic_DNA"/>
</dbReference>
<dbReference type="RefSeq" id="WP_012141885.1">
    <property type="nucleotide sequence ID" value="NC_009831.1"/>
</dbReference>
<dbReference type="SMR" id="A8FTH6"/>
<dbReference type="STRING" id="425104.Ssed_1538"/>
<dbReference type="KEGG" id="sse:Ssed_1538"/>
<dbReference type="eggNOG" id="COG0215">
    <property type="taxonomic scope" value="Bacteria"/>
</dbReference>
<dbReference type="HOGENOM" id="CLU_013528_0_1_6"/>
<dbReference type="OrthoDB" id="9815130at2"/>
<dbReference type="Proteomes" id="UP000002015">
    <property type="component" value="Chromosome"/>
</dbReference>
<dbReference type="GO" id="GO:0005829">
    <property type="term" value="C:cytosol"/>
    <property type="evidence" value="ECO:0007669"/>
    <property type="project" value="TreeGrafter"/>
</dbReference>
<dbReference type="GO" id="GO:0005524">
    <property type="term" value="F:ATP binding"/>
    <property type="evidence" value="ECO:0007669"/>
    <property type="project" value="UniProtKB-UniRule"/>
</dbReference>
<dbReference type="GO" id="GO:0004817">
    <property type="term" value="F:cysteine-tRNA ligase activity"/>
    <property type="evidence" value="ECO:0007669"/>
    <property type="project" value="UniProtKB-UniRule"/>
</dbReference>
<dbReference type="GO" id="GO:0008270">
    <property type="term" value="F:zinc ion binding"/>
    <property type="evidence" value="ECO:0007669"/>
    <property type="project" value="UniProtKB-UniRule"/>
</dbReference>
<dbReference type="GO" id="GO:0006423">
    <property type="term" value="P:cysteinyl-tRNA aminoacylation"/>
    <property type="evidence" value="ECO:0007669"/>
    <property type="project" value="UniProtKB-UniRule"/>
</dbReference>
<dbReference type="CDD" id="cd07963">
    <property type="entry name" value="Anticodon_Ia_Cys"/>
    <property type="match status" value="1"/>
</dbReference>
<dbReference type="CDD" id="cd00672">
    <property type="entry name" value="CysRS_core"/>
    <property type="match status" value="1"/>
</dbReference>
<dbReference type="FunFam" id="3.40.50.620:FF:000009">
    <property type="entry name" value="Cysteine--tRNA ligase"/>
    <property type="match status" value="1"/>
</dbReference>
<dbReference type="Gene3D" id="1.20.120.1910">
    <property type="entry name" value="Cysteine-tRNA ligase, C-terminal anti-codon recognition domain"/>
    <property type="match status" value="1"/>
</dbReference>
<dbReference type="Gene3D" id="3.40.50.620">
    <property type="entry name" value="HUPs"/>
    <property type="match status" value="1"/>
</dbReference>
<dbReference type="HAMAP" id="MF_00041">
    <property type="entry name" value="Cys_tRNA_synth"/>
    <property type="match status" value="1"/>
</dbReference>
<dbReference type="InterPro" id="IPR015803">
    <property type="entry name" value="Cys-tRNA-ligase"/>
</dbReference>
<dbReference type="InterPro" id="IPR015273">
    <property type="entry name" value="Cys-tRNA-synt_Ia_DALR"/>
</dbReference>
<dbReference type="InterPro" id="IPR024909">
    <property type="entry name" value="Cys-tRNA/MSH_ligase"/>
</dbReference>
<dbReference type="InterPro" id="IPR056411">
    <property type="entry name" value="CysS_C"/>
</dbReference>
<dbReference type="InterPro" id="IPR014729">
    <property type="entry name" value="Rossmann-like_a/b/a_fold"/>
</dbReference>
<dbReference type="InterPro" id="IPR032678">
    <property type="entry name" value="tRNA-synt_1_cat_dom"/>
</dbReference>
<dbReference type="InterPro" id="IPR009080">
    <property type="entry name" value="tRNAsynth_Ia_anticodon-bd"/>
</dbReference>
<dbReference type="NCBIfam" id="TIGR00435">
    <property type="entry name" value="cysS"/>
    <property type="match status" value="1"/>
</dbReference>
<dbReference type="PANTHER" id="PTHR10890:SF3">
    <property type="entry name" value="CYSTEINE--TRNA LIGASE, CYTOPLASMIC"/>
    <property type="match status" value="1"/>
</dbReference>
<dbReference type="PANTHER" id="PTHR10890">
    <property type="entry name" value="CYSTEINYL-TRNA SYNTHETASE"/>
    <property type="match status" value="1"/>
</dbReference>
<dbReference type="Pfam" id="PF23493">
    <property type="entry name" value="CysS_C"/>
    <property type="match status" value="1"/>
</dbReference>
<dbReference type="Pfam" id="PF09190">
    <property type="entry name" value="DALR_2"/>
    <property type="match status" value="1"/>
</dbReference>
<dbReference type="Pfam" id="PF01406">
    <property type="entry name" value="tRNA-synt_1e"/>
    <property type="match status" value="1"/>
</dbReference>
<dbReference type="PRINTS" id="PR00983">
    <property type="entry name" value="TRNASYNTHCYS"/>
</dbReference>
<dbReference type="SMART" id="SM00840">
    <property type="entry name" value="DALR_2"/>
    <property type="match status" value="1"/>
</dbReference>
<dbReference type="SUPFAM" id="SSF47323">
    <property type="entry name" value="Anticodon-binding domain of a subclass of class I aminoacyl-tRNA synthetases"/>
    <property type="match status" value="1"/>
</dbReference>
<dbReference type="SUPFAM" id="SSF52374">
    <property type="entry name" value="Nucleotidylyl transferase"/>
    <property type="match status" value="1"/>
</dbReference>
<feature type="chain" id="PRO_0000332905" description="Cysteine--tRNA ligase">
    <location>
        <begin position="1"/>
        <end position="459"/>
    </location>
</feature>
<feature type="short sequence motif" description="'HIGH' region">
    <location>
        <begin position="30"/>
        <end position="40"/>
    </location>
</feature>
<feature type="short sequence motif" description="'KMSKS' region">
    <location>
        <begin position="266"/>
        <end position="270"/>
    </location>
</feature>
<feature type="binding site" evidence="1">
    <location>
        <position position="28"/>
    </location>
    <ligand>
        <name>Zn(2+)</name>
        <dbReference type="ChEBI" id="CHEBI:29105"/>
    </ligand>
</feature>
<feature type="binding site" evidence="1">
    <location>
        <position position="209"/>
    </location>
    <ligand>
        <name>Zn(2+)</name>
        <dbReference type="ChEBI" id="CHEBI:29105"/>
    </ligand>
</feature>
<feature type="binding site" evidence="1">
    <location>
        <position position="234"/>
    </location>
    <ligand>
        <name>Zn(2+)</name>
        <dbReference type="ChEBI" id="CHEBI:29105"/>
    </ligand>
</feature>
<feature type="binding site" evidence="1">
    <location>
        <position position="238"/>
    </location>
    <ligand>
        <name>Zn(2+)</name>
        <dbReference type="ChEBI" id="CHEBI:29105"/>
    </ligand>
</feature>
<feature type="binding site" evidence="1">
    <location>
        <position position="269"/>
    </location>
    <ligand>
        <name>ATP</name>
        <dbReference type="ChEBI" id="CHEBI:30616"/>
    </ligand>
</feature>
<organism>
    <name type="scientific">Shewanella sediminis (strain HAW-EB3)</name>
    <dbReference type="NCBI Taxonomy" id="425104"/>
    <lineage>
        <taxon>Bacteria</taxon>
        <taxon>Pseudomonadati</taxon>
        <taxon>Pseudomonadota</taxon>
        <taxon>Gammaproteobacteria</taxon>
        <taxon>Alteromonadales</taxon>
        <taxon>Shewanellaceae</taxon>
        <taxon>Shewanella</taxon>
    </lineage>
</organism>
<comment type="catalytic activity">
    <reaction evidence="1">
        <text>tRNA(Cys) + L-cysteine + ATP = L-cysteinyl-tRNA(Cys) + AMP + diphosphate</text>
        <dbReference type="Rhea" id="RHEA:17773"/>
        <dbReference type="Rhea" id="RHEA-COMP:9661"/>
        <dbReference type="Rhea" id="RHEA-COMP:9679"/>
        <dbReference type="ChEBI" id="CHEBI:30616"/>
        <dbReference type="ChEBI" id="CHEBI:33019"/>
        <dbReference type="ChEBI" id="CHEBI:35235"/>
        <dbReference type="ChEBI" id="CHEBI:78442"/>
        <dbReference type="ChEBI" id="CHEBI:78517"/>
        <dbReference type="ChEBI" id="CHEBI:456215"/>
        <dbReference type="EC" id="6.1.1.16"/>
    </reaction>
</comment>
<comment type="cofactor">
    <cofactor evidence="1">
        <name>Zn(2+)</name>
        <dbReference type="ChEBI" id="CHEBI:29105"/>
    </cofactor>
    <text evidence="1">Binds 1 zinc ion per subunit.</text>
</comment>
<comment type="subunit">
    <text evidence="1">Monomer.</text>
</comment>
<comment type="subcellular location">
    <subcellularLocation>
        <location evidence="1">Cytoplasm</location>
    </subcellularLocation>
</comment>
<comment type="similarity">
    <text evidence="1">Belongs to the class-I aminoacyl-tRNA synthetase family.</text>
</comment>